<protein>
    <recommendedName>
        <fullName>Rho guanine nucleotide exchange factor 9</fullName>
    </recommendedName>
    <alternativeName>
        <fullName>Collybistin</fullName>
    </alternativeName>
    <alternativeName>
        <fullName>PEM-2 homolog</fullName>
    </alternativeName>
    <alternativeName>
        <fullName>Rac/Cdc42 guanine nucleotide exchange factor 9</fullName>
    </alternativeName>
</protein>
<comment type="function">
    <text evidence="3 8">Acts as a guanine nucleotide exchange factor (GEF) for CDC42. Promotes formation of GPHN clusters (By similarity).</text>
</comment>
<comment type="subunit">
    <text evidence="3">Interacts with GPHN.</text>
</comment>
<comment type="interaction">
    <interactant intactId="EBI-3447299">
        <id>O43307</id>
    </interactant>
    <interactant intactId="EBI-6658203">
        <id>Q86YD7</id>
        <label>FAM90A1</label>
    </interactant>
    <organismsDiffer>false</organismsDiffer>
    <experiments>3</experiments>
</comment>
<comment type="interaction">
    <interactant intactId="EBI-3447299">
        <id>O43307</id>
    </interactant>
    <interactant intactId="EBI-2339898">
        <id>Q9NW38</id>
        <label>FANCL</label>
    </interactant>
    <organismsDiffer>false</organismsDiffer>
    <experiments>3</experiments>
</comment>
<comment type="interaction">
    <interactant intactId="EBI-3447299">
        <id>O43307</id>
    </interactant>
    <interactant intactId="EBI-399080">
        <id>Q92993</id>
        <label>KAT5</label>
    </interactant>
    <organismsDiffer>false</organismsDiffer>
    <experiments>3</experiments>
</comment>
<comment type="interaction">
    <interactant intactId="EBI-3447299">
        <id>O43307</id>
    </interactant>
    <interactant intactId="EBI-11742507">
        <id>Q8TAP4-4</id>
        <label>LMO3</label>
    </interactant>
    <organismsDiffer>false</organismsDiffer>
    <experiments>3</experiments>
</comment>
<comment type="interaction">
    <interactant intactId="EBI-3447299">
        <id>O43307</id>
    </interactant>
    <interactant intactId="EBI-9090795">
        <id>Q15047-2</id>
        <label>SETDB1</label>
    </interactant>
    <organismsDiffer>false</organismsDiffer>
    <experiments>3</experiments>
</comment>
<comment type="interaction">
    <interactant intactId="EBI-3447299">
        <id>O43307</id>
    </interactant>
    <interactant intactId="EBI-8787464">
        <id>Q9NU19</id>
        <label>TBC1D22B</label>
    </interactant>
    <organismsDiffer>false</organismsDiffer>
    <experiments>3</experiments>
</comment>
<comment type="interaction">
    <interactant intactId="EBI-3447299">
        <id>O43307</id>
    </interactant>
    <interactant intactId="EBI-10241197">
        <id>Q3SY00</id>
        <label>TSGA10IP</label>
    </interactant>
    <organismsDiffer>false</organismsDiffer>
    <experiments>3</experiments>
</comment>
<comment type="interaction">
    <interactant intactId="EBI-3447299">
        <id>O43307</id>
    </interactant>
    <interactant intactId="EBI-11980193">
        <id>Q14119</id>
        <label>VEZF1</label>
    </interactant>
    <organismsDiffer>false</organismsDiffer>
    <experiments>3</experiments>
</comment>
<comment type="interaction">
    <interactant intactId="EBI-3447299">
        <id>O43307</id>
    </interactant>
    <interactant intactId="EBI-359832">
        <id>P61981</id>
        <label>YWHAG</label>
    </interactant>
    <organismsDiffer>false</organismsDiffer>
    <experiments>3</experiments>
</comment>
<comment type="interaction">
    <interactant intactId="EBI-3447299">
        <id>O43307</id>
    </interactant>
    <interactant intactId="EBI-11741890">
        <id>Q86VK4-3</id>
        <label>ZNF410</label>
    </interactant>
    <organismsDiffer>false</organismsDiffer>
    <experiments>3</experiments>
</comment>
<comment type="subcellular location">
    <subcellularLocation>
        <location evidence="8">Cytoplasm</location>
    </subcellularLocation>
    <subcellularLocation>
        <location evidence="2">Postsynaptic density</location>
    </subcellularLocation>
</comment>
<comment type="alternative products">
    <event type="alternative splicing"/>
    <isoform>
        <id>O43307-1</id>
        <name>1</name>
        <name>CB3(SH3+)</name>
        <sequence type="displayed"/>
    </isoform>
    <isoform>
        <id>O43307-2</id>
        <name>2</name>
        <name>CB3(SH3-)</name>
        <sequence type="described" ref="VSP_042920 VSP_042921"/>
    </isoform>
    <isoform>
        <id>O43307-3</id>
        <name>3</name>
        <sequence type="described" ref="VSP_044555"/>
    </isoform>
</comment>
<comment type="tissue specificity">
    <text evidence="8">Detected in brain. Detected at low levels in heart.</text>
</comment>
<comment type="disease" evidence="9 10 12">
    <disease id="DI-01088">
        <name>Developmental and epileptic encephalopathy 8</name>
        <acronym>DEE8</acronym>
        <description>A disorder characterized by hyperekplexia and early infantile epileptic encephalopathy. Neurologic features include exaggerated startle response, seizures, impaired psychomotor development, and intellectual disability. Seizures can be provoked by tactile stimulation or extreme emotion.</description>
        <dbReference type="MIM" id="300607"/>
    </disease>
    <text>The disease is caused by variants affecting the gene represented in this entry.</text>
</comment>
<comment type="sequence caution" evidence="15">
    <conflict type="erroneous initiation">
        <sequence resource="EMBL-CDS" id="BAA24854"/>
    </conflict>
    <text>Extended N-terminus.</text>
</comment>
<keyword id="KW-0002">3D-structure</keyword>
<keyword id="KW-0025">Alternative splicing</keyword>
<keyword id="KW-0963">Cytoplasm</keyword>
<keyword id="KW-0225">Disease variant</keyword>
<keyword id="KW-0887">Epilepsy</keyword>
<keyword id="KW-0344">Guanine-nucleotide releasing factor</keyword>
<keyword id="KW-0597">Phosphoprotein</keyword>
<keyword id="KW-1267">Proteomics identification</keyword>
<keyword id="KW-1185">Reference proteome</keyword>
<keyword id="KW-0728">SH3 domain</keyword>
<keyword id="KW-0770">Synapse</keyword>
<sequence>MTLLITGDSIVSAEAVWDHVTMANRELAFKAGDVIKVLDASNKDWWWGQIDDEEGWFPASFVRLWVNQEDEVEEGPSDVQNGHLDPNSDCLCLGRPLQNRDQMRANVINEIMSTERHYIKHLKDICEGYLKQCRKRRDMFSDEQLKVIFGNIEDIYRFQMGFVRDLEKQYNNDDPHLSEIGPCFLEHQDGFWIYSEYCNNHLDACMELSKLMKDSRYQHFFEACRLLQQMIDIAIDGFLLTPVQKICKYPLQLAELLKYTAQDHSDYRYVAAALAVMRNVTQQINERKRRLENIDKIAQWQASVLDWEGEDILDRSSELIYTGEMAWIYQPYGRNQQRVFFLFDHQMVLCKKDLIRRDILYYKGRIDMDKYEVVDIEDGRDDDFNVSMKNAFKLHNKETEEIHLFFAKKLEEKIRWLRAFREERKMVQEDEKIGFEISENQKRQAAMTVRKVPKQKGVNSARSVPPSYPPPQDPLNHGQYLVPDGIAQSQVFEFTEPKRSQSPFWQNFSRLTPFKK</sequence>
<name>ARHG9_HUMAN</name>
<accession>O43307</accession>
<accession>A8K1S8</accession>
<accession>B4DHC7</accession>
<accession>F8W7P8</accession>
<accession>Q5JSL6</accession>
<gene>
    <name type="primary">ARHGEF9</name>
    <name type="synonym">ARHDH9</name>
    <name type="synonym">KIAA0424</name>
</gene>
<feature type="chain" id="PRO_0000253895" description="Rho guanine nucleotide exchange factor 9">
    <location>
        <begin position="1"/>
        <end position="516"/>
    </location>
</feature>
<feature type="domain" description="SH3" evidence="6">
    <location>
        <begin position="8"/>
        <end position="67"/>
    </location>
</feature>
<feature type="domain" description="DH" evidence="4">
    <location>
        <begin position="103"/>
        <end position="287"/>
    </location>
</feature>
<feature type="domain" description="PH" evidence="5">
    <location>
        <begin position="318"/>
        <end position="425"/>
    </location>
</feature>
<feature type="region of interest" description="Interaction with GPHN" evidence="1">
    <location>
        <begin position="100"/>
        <end position="110"/>
    </location>
</feature>
<feature type="region of interest" description="Disordered" evidence="7">
    <location>
        <begin position="453"/>
        <end position="480"/>
    </location>
</feature>
<feature type="modified residue" description="Phosphoserine" evidence="2">
    <location>
        <position position="502"/>
    </location>
</feature>
<feature type="splice variant" id="VSP_044555" description="In isoform 3." evidence="14">
    <location>
        <begin position="1"/>
        <end position="102"/>
    </location>
</feature>
<feature type="splice variant" id="VSP_042920" description="In isoform 2." evidence="13">
    <original>MTLLITGDSI</original>
    <variation>MQWIRGGSGM</variation>
    <location>
        <begin position="1"/>
        <end position="10"/>
    </location>
</feature>
<feature type="splice variant" id="VSP_042921" description="In isoform 2." evidence="13">
    <location>
        <begin position="11"/>
        <end position="63"/>
    </location>
</feature>
<feature type="sequence variant" id="VAR_028752" description="In DEE8; affects dendritic gephrin clustering and trafficking of GABA-A receptors to synapses; dbSNP:rs121918361." evidence="9">
    <original>G</original>
    <variation>A</variation>
    <location>
        <position position="55"/>
    </location>
</feature>
<feature type="sequence variant" id="VAR_072742" description="In DEE8." evidence="10 12">
    <original>R</original>
    <variation>H</variation>
    <location>
        <position position="290"/>
    </location>
</feature>
<feature type="sequence variant" id="VAR_069370" description="Found in a patient with moderate intellectual disability, speech delay and sleep disturbances; likely pathogenic." evidence="11">
    <original>E</original>
    <variation>K</variation>
    <location>
        <position position="401"/>
    </location>
</feature>
<feature type="sequence conflict" description="In Ref. 2; BAF82682." evidence="15" ref="2">
    <original>N</original>
    <variation>D</variation>
    <location>
        <position position="109"/>
    </location>
</feature>
<feature type="strand" evidence="16">
    <location>
        <begin position="11"/>
        <end position="17"/>
    </location>
</feature>
<feature type="strand" evidence="16">
    <location>
        <begin position="22"/>
        <end position="26"/>
    </location>
</feature>
<feature type="strand" evidence="16">
    <location>
        <begin position="34"/>
        <end position="39"/>
    </location>
</feature>
<feature type="strand" evidence="16">
    <location>
        <begin position="42"/>
        <end position="49"/>
    </location>
</feature>
<feature type="strand" evidence="16">
    <location>
        <begin position="54"/>
        <end position="58"/>
    </location>
</feature>
<feature type="helix" evidence="16">
    <location>
        <begin position="59"/>
        <end position="61"/>
    </location>
</feature>
<feature type="strand" evidence="16">
    <location>
        <begin position="62"/>
        <end position="66"/>
    </location>
</feature>
<evidence type="ECO:0000250" key="1"/>
<evidence type="ECO:0000250" key="2">
    <source>
        <dbReference type="UniProtKB" id="Q3UTH8"/>
    </source>
</evidence>
<evidence type="ECO:0000250" key="3">
    <source>
        <dbReference type="UniProtKB" id="Q9QX73"/>
    </source>
</evidence>
<evidence type="ECO:0000255" key="4">
    <source>
        <dbReference type="PROSITE-ProRule" id="PRU00062"/>
    </source>
</evidence>
<evidence type="ECO:0000255" key="5">
    <source>
        <dbReference type="PROSITE-ProRule" id="PRU00145"/>
    </source>
</evidence>
<evidence type="ECO:0000255" key="6">
    <source>
        <dbReference type="PROSITE-ProRule" id="PRU00192"/>
    </source>
</evidence>
<evidence type="ECO:0000256" key="7">
    <source>
        <dbReference type="SAM" id="MobiDB-lite"/>
    </source>
</evidence>
<evidence type="ECO:0000269" key="8">
    <source>
    </source>
</evidence>
<evidence type="ECO:0000269" key="9">
    <source>
    </source>
</evidence>
<evidence type="ECO:0000269" key="10">
    <source>
    </source>
</evidence>
<evidence type="ECO:0000269" key="11">
    <source>
    </source>
</evidence>
<evidence type="ECO:0000269" key="12">
    <source>
    </source>
</evidence>
<evidence type="ECO:0000303" key="13">
    <source>
    </source>
</evidence>
<evidence type="ECO:0000303" key="14">
    <source>
    </source>
</evidence>
<evidence type="ECO:0000305" key="15"/>
<evidence type="ECO:0007829" key="16">
    <source>
        <dbReference type="PDB" id="2YSQ"/>
    </source>
</evidence>
<dbReference type="EMBL" id="AB007884">
    <property type="protein sequence ID" value="BAA24854.2"/>
    <property type="status" value="ALT_INIT"/>
    <property type="molecule type" value="mRNA"/>
</dbReference>
<dbReference type="EMBL" id="AK289993">
    <property type="protein sequence ID" value="BAF82682.1"/>
    <property type="molecule type" value="mRNA"/>
</dbReference>
<dbReference type="EMBL" id="AK295033">
    <property type="protein sequence ID" value="BAG58088.1"/>
    <property type="molecule type" value="mRNA"/>
</dbReference>
<dbReference type="EMBL" id="AL451106">
    <property type="status" value="NOT_ANNOTATED_CDS"/>
    <property type="molecule type" value="Genomic_DNA"/>
</dbReference>
<dbReference type="EMBL" id="AL391277">
    <property type="status" value="NOT_ANNOTATED_CDS"/>
    <property type="molecule type" value="Genomic_DNA"/>
</dbReference>
<dbReference type="EMBL" id="AL355142">
    <property type="status" value="NOT_ANNOTATED_CDS"/>
    <property type="molecule type" value="Genomic_DNA"/>
</dbReference>
<dbReference type="EMBL" id="BC056892">
    <property type="status" value="NOT_ANNOTATED_CDS"/>
    <property type="molecule type" value="mRNA"/>
</dbReference>
<dbReference type="EMBL" id="BC117406">
    <property type="protein sequence ID" value="AAI17407.1"/>
    <property type="molecule type" value="mRNA"/>
</dbReference>
<dbReference type="CCDS" id="CCDS35315.1">
    <molecule id="O43307-1"/>
</dbReference>
<dbReference type="CCDS" id="CCDS55429.1">
    <molecule id="O43307-3"/>
</dbReference>
<dbReference type="CCDS" id="CCDS55430.1">
    <molecule id="O43307-2"/>
</dbReference>
<dbReference type="RefSeq" id="NP_001166950.1">
    <molecule id="O43307-2"/>
    <property type="nucleotide sequence ID" value="NM_001173479.2"/>
</dbReference>
<dbReference type="RefSeq" id="NP_001166951.1">
    <molecule id="O43307-3"/>
    <property type="nucleotide sequence ID" value="NM_001173480.2"/>
</dbReference>
<dbReference type="RefSeq" id="NP_001355959.1">
    <molecule id="O43307-1"/>
    <property type="nucleotide sequence ID" value="NM_001369030.1"/>
</dbReference>
<dbReference type="RefSeq" id="NP_001355971.1">
    <molecule id="O43307-3"/>
    <property type="nucleotide sequence ID" value="NM_001369042.1"/>
</dbReference>
<dbReference type="RefSeq" id="NP_056000.1">
    <molecule id="O43307-1"/>
    <property type="nucleotide sequence ID" value="NM_015185.3"/>
</dbReference>
<dbReference type="RefSeq" id="XP_016884855.1">
    <property type="nucleotide sequence ID" value="XM_017029366.1"/>
</dbReference>
<dbReference type="RefSeq" id="XP_016884862.1">
    <property type="nucleotide sequence ID" value="XM_017029373.1"/>
</dbReference>
<dbReference type="PDB" id="2YSQ">
    <property type="method" value="NMR"/>
    <property type="chains" value="A=7-75"/>
</dbReference>
<dbReference type="PDBsum" id="2YSQ"/>
<dbReference type="BMRB" id="O43307"/>
<dbReference type="SMR" id="O43307"/>
<dbReference type="BioGRID" id="116834">
    <property type="interactions" value="29"/>
</dbReference>
<dbReference type="FunCoup" id="O43307">
    <property type="interactions" value="197"/>
</dbReference>
<dbReference type="IntAct" id="O43307">
    <property type="interactions" value="24"/>
</dbReference>
<dbReference type="MINT" id="O43307"/>
<dbReference type="STRING" id="9606.ENSP00000490940"/>
<dbReference type="iPTMnet" id="O43307"/>
<dbReference type="PhosphoSitePlus" id="O43307"/>
<dbReference type="BioMuta" id="ARHGEF9"/>
<dbReference type="jPOST" id="O43307"/>
<dbReference type="MassIVE" id="O43307"/>
<dbReference type="PaxDb" id="9606-ENSP00000253401"/>
<dbReference type="PeptideAtlas" id="O43307"/>
<dbReference type="ProteomicsDB" id="29986"/>
<dbReference type="ProteomicsDB" id="48882">
    <molecule id="O43307-1"/>
</dbReference>
<dbReference type="ProteomicsDB" id="48883">
    <molecule id="O43307-2"/>
</dbReference>
<dbReference type="Antibodypedia" id="27024">
    <property type="antibodies" value="180 antibodies from 30 providers"/>
</dbReference>
<dbReference type="DNASU" id="23229"/>
<dbReference type="Ensembl" id="ENST00000253401.10">
    <molecule id="O43307-1"/>
    <property type="protein sequence ID" value="ENSP00000253401.6"/>
    <property type="gene ID" value="ENSG00000131089.17"/>
</dbReference>
<dbReference type="Ensembl" id="ENST00000623517.3">
    <molecule id="O43307-2"/>
    <property type="protein sequence ID" value="ENSP00000485369.1"/>
    <property type="gene ID" value="ENSG00000131089.17"/>
</dbReference>
<dbReference type="Ensembl" id="ENST00000624843.3">
    <molecule id="O43307-3"/>
    <property type="protein sequence ID" value="ENSP00000485626.1"/>
    <property type="gene ID" value="ENSG00000131089.17"/>
</dbReference>
<dbReference type="Ensembl" id="ENST00000671907.1">
    <molecule id="O43307-1"/>
    <property type="protein sequence ID" value="ENSP00000500829.1"/>
    <property type="gene ID" value="ENSG00000131089.17"/>
</dbReference>
<dbReference type="GeneID" id="23229"/>
<dbReference type="KEGG" id="hsa:23229"/>
<dbReference type="UCSC" id="uc004dvj.3">
    <molecule id="O43307-1"/>
    <property type="organism name" value="human"/>
</dbReference>
<dbReference type="AGR" id="HGNC:14561"/>
<dbReference type="CTD" id="23229"/>
<dbReference type="DisGeNET" id="23229"/>
<dbReference type="GeneCards" id="ARHGEF9"/>
<dbReference type="HGNC" id="HGNC:14561">
    <property type="gene designation" value="ARHGEF9"/>
</dbReference>
<dbReference type="HPA" id="ENSG00000131089">
    <property type="expression patterns" value="Tissue enhanced (retina)"/>
</dbReference>
<dbReference type="MalaCards" id="ARHGEF9"/>
<dbReference type="MIM" id="300429">
    <property type="type" value="gene"/>
</dbReference>
<dbReference type="MIM" id="300607">
    <property type="type" value="phenotype"/>
</dbReference>
<dbReference type="neXtProt" id="NX_O43307"/>
<dbReference type="OpenTargets" id="ENSG00000131089"/>
<dbReference type="Orphanet" id="163985">
    <property type="disease" value="Hyperekplexia-epilepsy syndrome"/>
</dbReference>
<dbReference type="PharmGKB" id="PA24978"/>
<dbReference type="VEuPathDB" id="HostDB:ENSG00000131089"/>
<dbReference type="eggNOG" id="KOG3519">
    <property type="taxonomic scope" value="Eukaryota"/>
</dbReference>
<dbReference type="GeneTree" id="ENSGT00940000154103"/>
<dbReference type="HOGENOM" id="CLU_008436_2_1_1"/>
<dbReference type="InParanoid" id="O43307"/>
<dbReference type="OrthoDB" id="660555at2759"/>
<dbReference type="PAN-GO" id="O43307">
    <property type="GO annotations" value="5 GO annotations based on evolutionary models"/>
</dbReference>
<dbReference type="PhylomeDB" id="O43307"/>
<dbReference type="TreeFam" id="TF316832"/>
<dbReference type="PathwayCommons" id="O43307"/>
<dbReference type="Reactome" id="R-HSA-193648">
    <property type="pathway name" value="NRAGE signals death through JNK"/>
</dbReference>
<dbReference type="Reactome" id="R-HSA-416482">
    <property type="pathway name" value="G alpha (12/13) signalling events"/>
</dbReference>
<dbReference type="Reactome" id="R-HSA-9013148">
    <property type="pathway name" value="CDC42 GTPase cycle"/>
</dbReference>
<dbReference type="Reactome" id="R-HSA-9013406">
    <property type="pathway name" value="RHOQ GTPase cycle"/>
</dbReference>
<dbReference type="Reactome" id="R-HSA-977443">
    <property type="pathway name" value="GABA receptor activation"/>
</dbReference>
<dbReference type="SignaLink" id="O43307"/>
<dbReference type="SIGNOR" id="O43307"/>
<dbReference type="BioGRID-ORCS" id="23229">
    <property type="hits" value="12 hits in 769 CRISPR screens"/>
</dbReference>
<dbReference type="ChiTaRS" id="ARHGEF9">
    <property type="organism name" value="human"/>
</dbReference>
<dbReference type="EvolutionaryTrace" id="O43307"/>
<dbReference type="GeneWiki" id="ARHGEF9"/>
<dbReference type="GenomeRNAi" id="23229"/>
<dbReference type="Pharos" id="O43307">
    <property type="development level" value="Tbio"/>
</dbReference>
<dbReference type="PRO" id="PR:O43307"/>
<dbReference type="Proteomes" id="UP000005640">
    <property type="component" value="Chromosome X"/>
</dbReference>
<dbReference type="RNAct" id="O43307">
    <property type="molecule type" value="protein"/>
</dbReference>
<dbReference type="Bgee" id="ENSG00000131089">
    <property type="expression patterns" value="Expressed in Brodmann (1909) area 46 and 183 other cell types or tissues"/>
</dbReference>
<dbReference type="ExpressionAtlas" id="O43307">
    <property type="expression patterns" value="baseline and differential"/>
</dbReference>
<dbReference type="GO" id="GO:0005829">
    <property type="term" value="C:cytosol"/>
    <property type="evidence" value="ECO:0000314"/>
    <property type="project" value="HPA"/>
</dbReference>
<dbReference type="GO" id="GO:0098982">
    <property type="term" value="C:GABA-ergic synapse"/>
    <property type="evidence" value="ECO:0000318"/>
    <property type="project" value="GO_Central"/>
</dbReference>
<dbReference type="GO" id="GO:0014069">
    <property type="term" value="C:postsynaptic density"/>
    <property type="evidence" value="ECO:0000250"/>
    <property type="project" value="UniProtKB"/>
</dbReference>
<dbReference type="GO" id="GO:0099572">
    <property type="term" value="C:postsynaptic specialization"/>
    <property type="evidence" value="ECO:0000318"/>
    <property type="project" value="GO_Central"/>
</dbReference>
<dbReference type="GO" id="GO:0005085">
    <property type="term" value="F:guanyl-nucleotide exchange factor activity"/>
    <property type="evidence" value="ECO:0000318"/>
    <property type="project" value="GO_Central"/>
</dbReference>
<dbReference type="GO" id="GO:0099150">
    <property type="term" value="P:regulation of postsynaptic specialization assembly"/>
    <property type="evidence" value="ECO:0000318"/>
    <property type="project" value="GO_Central"/>
</dbReference>
<dbReference type="GO" id="GO:0051056">
    <property type="term" value="P:regulation of small GTPase mediated signal transduction"/>
    <property type="evidence" value="ECO:0000304"/>
    <property type="project" value="Reactome"/>
</dbReference>
<dbReference type="CDD" id="cd01224">
    <property type="entry name" value="PH_Collybistin_ASEF"/>
    <property type="match status" value="1"/>
</dbReference>
<dbReference type="CDD" id="cd00160">
    <property type="entry name" value="RhoGEF"/>
    <property type="match status" value="1"/>
</dbReference>
<dbReference type="CDD" id="cd11975">
    <property type="entry name" value="SH3_ARHGEF9"/>
    <property type="match status" value="1"/>
</dbReference>
<dbReference type="FunFam" id="1.20.900.10:FF:000002">
    <property type="entry name" value="Rho guanine nucleotide exchange factor 9"/>
    <property type="match status" value="1"/>
</dbReference>
<dbReference type="FunFam" id="2.30.29.30:FF:000015">
    <property type="entry name" value="Rho guanine nucleotide exchange factor 9"/>
    <property type="match status" value="1"/>
</dbReference>
<dbReference type="FunFam" id="2.30.30.40:FF:000037">
    <property type="entry name" value="Rho guanine nucleotide exchange factor 9"/>
    <property type="match status" value="1"/>
</dbReference>
<dbReference type="Gene3D" id="1.20.900.10">
    <property type="entry name" value="Dbl homology (DH) domain"/>
    <property type="match status" value="1"/>
</dbReference>
<dbReference type="Gene3D" id="2.30.29.30">
    <property type="entry name" value="Pleckstrin-homology domain (PH domain)/Phosphotyrosine-binding domain (PTB)"/>
    <property type="match status" value="1"/>
</dbReference>
<dbReference type="Gene3D" id="2.30.30.40">
    <property type="entry name" value="SH3 Domains"/>
    <property type="match status" value="1"/>
</dbReference>
<dbReference type="InterPro" id="IPR035728">
    <property type="entry name" value="ARHGEF9_SH3"/>
</dbReference>
<dbReference type="InterPro" id="IPR035899">
    <property type="entry name" value="DBL_dom_sf"/>
</dbReference>
<dbReference type="InterPro" id="IPR000219">
    <property type="entry name" value="DH_dom"/>
</dbReference>
<dbReference type="InterPro" id="IPR011993">
    <property type="entry name" value="PH-like_dom_sf"/>
</dbReference>
<dbReference type="InterPro" id="IPR001849">
    <property type="entry name" value="PH_domain"/>
</dbReference>
<dbReference type="InterPro" id="IPR036028">
    <property type="entry name" value="SH3-like_dom_sf"/>
</dbReference>
<dbReference type="InterPro" id="IPR001452">
    <property type="entry name" value="SH3_domain"/>
</dbReference>
<dbReference type="InterPro" id="IPR055251">
    <property type="entry name" value="SOS1_NGEF_PH"/>
</dbReference>
<dbReference type="PANTHER" id="PTHR47544">
    <property type="entry name" value="RHO GUANINE NUCLEOTIDE EXCHANGE FACTOR 4"/>
    <property type="match status" value="1"/>
</dbReference>
<dbReference type="PANTHER" id="PTHR47544:SF4">
    <property type="entry name" value="RHO GUANINE NUCLEOTIDE EXCHANGE FACTOR 9"/>
    <property type="match status" value="1"/>
</dbReference>
<dbReference type="Pfam" id="PF00621">
    <property type="entry name" value="RhoGEF"/>
    <property type="match status" value="1"/>
</dbReference>
<dbReference type="Pfam" id="PF07653">
    <property type="entry name" value="SH3_2"/>
    <property type="match status" value="1"/>
</dbReference>
<dbReference type="Pfam" id="PF22697">
    <property type="entry name" value="SOS1_NGEF_PH"/>
    <property type="match status" value="1"/>
</dbReference>
<dbReference type="SMART" id="SM00233">
    <property type="entry name" value="PH"/>
    <property type="match status" value="1"/>
</dbReference>
<dbReference type="SMART" id="SM00325">
    <property type="entry name" value="RhoGEF"/>
    <property type="match status" value="1"/>
</dbReference>
<dbReference type="SMART" id="SM00326">
    <property type="entry name" value="SH3"/>
    <property type="match status" value="1"/>
</dbReference>
<dbReference type="SUPFAM" id="SSF48065">
    <property type="entry name" value="DBL homology domain (DH-domain)"/>
    <property type="match status" value="1"/>
</dbReference>
<dbReference type="SUPFAM" id="SSF50729">
    <property type="entry name" value="PH domain-like"/>
    <property type="match status" value="1"/>
</dbReference>
<dbReference type="SUPFAM" id="SSF50044">
    <property type="entry name" value="SH3-domain"/>
    <property type="match status" value="1"/>
</dbReference>
<dbReference type="PROSITE" id="PS50010">
    <property type="entry name" value="DH_2"/>
    <property type="match status" value="1"/>
</dbReference>
<dbReference type="PROSITE" id="PS50003">
    <property type="entry name" value="PH_DOMAIN"/>
    <property type="match status" value="1"/>
</dbReference>
<dbReference type="PROSITE" id="PS50002">
    <property type="entry name" value="SH3"/>
    <property type="match status" value="1"/>
</dbReference>
<reference key="1">
    <citation type="journal article" date="1997" name="DNA Res.">
        <title>Prediction of the coding sequences of unidentified human genes. VIII. 78 new cDNA clones from brain which code for large proteins in vitro.</title>
        <authorList>
            <person name="Ishikawa K."/>
            <person name="Nagase T."/>
            <person name="Nakajima D."/>
            <person name="Seki N."/>
            <person name="Ohira M."/>
            <person name="Miyajima N."/>
            <person name="Tanaka A."/>
            <person name="Kotani H."/>
            <person name="Nomura N."/>
            <person name="Ohara O."/>
        </authorList>
    </citation>
    <scope>NUCLEOTIDE SEQUENCE [LARGE SCALE MRNA] (ISOFORM 1)</scope>
    <source>
        <tissue>Brain</tissue>
    </source>
</reference>
<reference key="2">
    <citation type="journal article" date="2004" name="Nat. Genet.">
        <title>Complete sequencing and characterization of 21,243 full-length human cDNAs.</title>
        <authorList>
            <person name="Ota T."/>
            <person name="Suzuki Y."/>
            <person name="Nishikawa T."/>
            <person name="Otsuki T."/>
            <person name="Sugiyama T."/>
            <person name="Irie R."/>
            <person name="Wakamatsu A."/>
            <person name="Hayashi K."/>
            <person name="Sato H."/>
            <person name="Nagai K."/>
            <person name="Kimura K."/>
            <person name="Makita H."/>
            <person name="Sekine M."/>
            <person name="Obayashi M."/>
            <person name="Nishi T."/>
            <person name="Shibahara T."/>
            <person name="Tanaka T."/>
            <person name="Ishii S."/>
            <person name="Yamamoto J."/>
            <person name="Saito K."/>
            <person name="Kawai Y."/>
            <person name="Isono Y."/>
            <person name="Nakamura Y."/>
            <person name="Nagahari K."/>
            <person name="Murakami K."/>
            <person name="Yasuda T."/>
            <person name="Iwayanagi T."/>
            <person name="Wagatsuma M."/>
            <person name="Shiratori A."/>
            <person name="Sudo H."/>
            <person name="Hosoiri T."/>
            <person name="Kaku Y."/>
            <person name="Kodaira H."/>
            <person name="Kondo H."/>
            <person name="Sugawara M."/>
            <person name="Takahashi M."/>
            <person name="Kanda K."/>
            <person name="Yokoi T."/>
            <person name="Furuya T."/>
            <person name="Kikkawa E."/>
            <person name="Omura Y."/>
            <person name="Abe K."/>
            <person name="Kamihara K."/>
            <person name="Katsuta N."/>
            <person name="Sato K."/>
            <person name="Tanikawa M."/>
            <person name="Yamazaki M."/>
            <person name="Ninomiya K."/>
            <person name="Ishibashi T."/>
            <person name="Yamashita H."/>
            <person name="Murakawa K."/>
            <person name="Fujimori K."/>
            <person name="Tanai H."/>
            <person name="Kimata M."/>
            <person name="Watanabe M."/>
            <person name="Hiraoka S."/>
            <person name="Chiba Y."/>
            <person name="Ishida S."/>
            <person name="Ono Y."/>
            <person name="Takiguchi S."/>
            <person name="Watanabe S."/>
            <person name="Yosida M."/>
            <person name="Hotuta T."/>
            <person name="Kusano J."/>
            <person name="Kanehori K."/>
            <person name="Takahashi-Fujii A."/>
            <person name="Hara H."/>
            <person name="Tanase T.-O."/>
            <person name="Nomura Y."/>
            <person name="Togiya S."/>
            <person name="Komai F."/>
            <person name="Hara R."/>
            <person name="Takeuchi K."/>
            <person name="Arita M."/>
            <person name="Imose N."/>
            <person name="Musashino K."/>
            <person name="Yuuki H."/>
            <person name="Oshima A."/>
            <person name="Sasaki N."/>
            <person name="Aotsuka S."/>
            <person name="Yoshikawa Y."/>
            <person name="Matsunawa H."/>
            <person name="Ichihara T."/>
            <person name="Shiohata N."/>
            <person name="Sano S."/>
            <person name="Moriya S."/>
            <person name="Momiyama H."/>
            <person name="Satoh N."/>
            <person name="Takami S."/>
            <person name="Terashima Y."/>
            <person name="Suzuki O."/>
            <person name="Nakagawa S."/>
            <person name="Senoh A."/>
            <person name="Mizoguchi H."/>
            <person name="Goto Y."/>
            <person name="Shimizu F."/>
            <person name="Wakebe H."/>
            <person name="Hishigaki H."/>
            <person name="Watanabe T."/>
            <person name="Sugiyama A."/>
            <person name="Takemoto M."/>
            <person name="Kawakami B."/>
            <person name="Yamazaki M."/>
            <person name="Watanabe K."/>
            <person name="Kumagai A."/>
            <person name="Itakura S."/>
            <person name="Fukuzumi Y."/>
            <person name="Fujimori Y."/>
            <person name="Komiyama M."/>
            <person name="Tashiro H."/>
            <person name="Tanigami A."/>
            <person name="Fujiwara T."/>
            <person name="Ono T."/>
            <person name="Yamada K."/>
            <person name="Fujii Y."/>
            <person name="Ozaki K."/>
            <person name="Hirao M."/>
            <person name="Ohmori Y."/>
            <person name="Kawabata A."/>
            <person name="Hikiji T."/>
            <person name="Kobatake N."/>
            <person name="Inagaki H."/>
            <person name="Ikema Y."/>
            <person name="Okamoto S."/>
            <person name="Okitani R."/>
            <person name="Kawakami T."/>
            <person name="Noguchi S."/>
            <person name="Itoh T."/>
            <person name="Shigeta K."/>
            <person name="Senba T."/>
            <person name="Matsumura K."/>
            <person name="Nakajima Y."/>
            <person name="Mizuno T."/>
            <person name="Morinaga M."/>
            <person name="Sasaki M."/>
            <person name="Togashi T."/>
            <person name="Oyama M."/>
            <person name="Hata H."/>
            <person name="Watanabe M."/>
            <person name="Komatsu T."/>
            <person name="Mizushima-Sugano J."/>
            <person name="Satoh T."/>
            <person name="Shirai Y."/>
            <person name="Takahashi Y."/>
            <person name="Nakagawa K."/>
            <person name="Okumura K."/>
            <person name="Nagase T."/>
            <person name="Nomura N."/>
            <person name="Kikuchi H."/>
            <person name="Masuho Y."/>
            <person name="Yamashita R."/>
            <person name="Nakai K."/>
            <person name="Yada T."/>
            <person name="Nakamura Y."/>
            <person name="Ohara O."/>
            <person name="Isogai T."/>
            <person name="Sugano S."/>
        </authorList>
    </citation>
    <scope>NUCLEOTIDE SEQUENCE [LARGE SCALE MRNA] (ISOFORMS 1 AND 2)</scope>
    <source>
        <tissue>Brain</tissue>
        <tissue>Hippocampus</tissue>
    </source>
</reference>
<reference key="3">
    <citation type="journal article" date="2005" name="Nature">
        <title>The DNA sequence of the human X chromosome.</title>
        <authorList>
            <person name="Ross M.T."/>
            <person name="Grafham D.V."/>
            <person name="Coffey A.J."/>
            <person name="Scherer S."/>
            <person name="McLay K."/>
            <person name="Muzny D."/>
            <person name="Platzer M."/>
            <person name="Howell G.R."/>
            <person name="Burrows C."/>
            <person name="Bird C.P."/>
            <person name="Frankish A."/>
            <person name="Lovell F.L."/>
            <person name="Howe K.L."/>
            <person name="Ashurst J.L."/>
            <person name="Fulton R.S."/>
            <person name="Sudbrak R."/>
            <person name="Wen G."/>
            <person name="Jones M.C."/>
            <person name="Hurles M.E."/>
            <person name="Andrews T.D."/>
            <person name="Scott C.E."/>
            <person name="Searle S."/>
            <person name="Ramser J."/>
            <person name="Whittaker A."/>
            <person name="Deadman R."/>
            <person name="Carter N.P."/>
            <person name="Hunt S.E."/>
            <person name="Chen R."/>
            <person name="Cree A."/>
            <person name="Gunaratne P."/>
            <person name="Havlak P."/>
            <person name="Hodgson A."/>
            <person name="Metzker M.L."/>
            <person name="Richards S."/>
            <person name="Scott G."/>
            <person name="Steffen D."/>
            <person name="Sodergren E."/>
            <person name="Wheeler D.A."/>
            <person name="Worley K.C."/>
            <person name="Ainscough R."/>
            <person name="Ambrose K.D."/>
            <person name="Ansari-Lari M.A."/>
            <person name="Aradhya S."/>
            <person name="Ashwell R.I."/>
            <person name="Babbage A.K."/>
            <person name="Bagguley C.L."/>
            <person name="Ballabio A."/>
            <person name="Banerjee R."/>
            <person name="Barker G.E."/>
            <person name="Barlow K.F."/>
            <person name="Barrett I.P."/>
            <person name="Bates K.N."/>
            <person name="Beare D.M."/>
            <person name="Beasley H."/>
            <person name="Beasley O."/>
            <person name="Beck A."/>
            <person name="Bethel G."/>
            <person name="Blechschmidt K."/>
            <person name="Brady N."/>
            <person name="Bray-Allen S."/>
            <person name="Bridgeman A.M."/>
            <person name="Brown A.J."/>
            <person name="Brown M.J."/>
            <person name="Bonnin D."/>
            <person name="Bruford E.A."/>
            <person name="Buhay C."/>
            <person name="Burch P."/>
            <person name="Burford D."/>
            <person name="Burgess J."/>
            <person name="Burrill W."/>
            <person name="Burton J."/>
            <person name="Bye J.M."/>
            <person name="Carder C."/>
            <person name="Carrel L."/>
            <person name="Chako J."/>
            <person name="Chapman J.C."/>
            <person name="Chavez D."/>
            <person name="Chen E."/>
            <person name="Chen G."/>
            <person name="Chen Y."/>
            <person name="Chen Z."/>
            <person name="Chinault C."/>
            <person name="Ciccodicola A."/>
            <person name="Clark S.Y."/>
            <person name="Clarke G."/>
            <person name="Clee C.M."/>
            <person name="Clegg S."/>
            <person name="Clerc-Blankenburg K."/>
            <person name="Clifford K."/>
            <person name="Cobley V."/>
            <person name="Cole C.G."/>
            <person name="Conquer J.S."/>
            <person name="Corby N."/>
            <person name="Connor R.E."/>
            <person name="David R."/>
            <person name="Davies J."/>
            <person name="Davis C."/>
            <person name="Davis J."/>
            <person name="Delgado O."/>
            <person name="Deshazo D."/>
            <person name="Dhami P."/>
            <person name="Ding Y."/>
            <person name="Dinh H."/>
            <person name="Dodsworth S."/>
            <person name="Draper H."/>
            <person name="Dugan-Rocha S."/>
            <person name="Dunham A."/>
            <person name="Dunn M."/>
            <person name="Durbin K.J."/>
            <person name="Dutta I."/>
            <person name="Eades T."/>
            <person name="Ellwood M."/>
            <person name="Emery-Cohen A."/>
            <person name="Errington H."/>
            <person name="Evans K.L."/>
            <person name="Faulkner L."/>
            <person name="Francis F."/>
            <person name="Frankland J."/>
            <person name="Fraser A.E."/>
            <person name="Galgoczy P."/>
            <person name="Gilbert J."/>
            <person name="Gill R."/>
            <person name="Gloeckner G."/>
            <person name="Gregory S.G."/>
            <person name="Gribble S."/>
            <person name="Griffiths C."/>
            <person name="Grocock R."/>
            <person name="Gu Y."/>
            <person name="Gwilliam R."/>
            <person name="Hamilton C."/>
            <person name="Hart E.A."/>
            <person name="Hawes A."/>
            <person name="Heath P.D."/>
            <person name="Heitmann K."/>
            <person name="Hennig S."/>
            <person name="Hernandez J."/>
            <person name="Hinzmann B."/>
            <person name="Ho S."/>
            <person name="Hoffs M."/>
            <person name="Howden P.J."/>
            <person name="Huckle E.J."/>
            <person name="Hume J."/>
            <person name="Hunt P.J."/>
            <person name="Hunt A.R."/>
            <person name="Isherwood J."/>
            <person name="Jacob L."/>
            <person name="Johnson D."/>
            <person name="Jones S."/>
            <person name="de Jong P.J."/>
            <person name="Joseph S.S."/>
            <person name="Keenan S."/>
            <person name="Kelly S."/>
            <person name="Kershaw J.K."/>
            <person name="Khan Z."/>
            <person name="Kioschis P."/>
            <person name="Klages S."/>
            <person name="Knights A.J."/>
            <person name="Kosiura A."/>
            <person name="Kovar-Smith C."/>
            <person name="Laird G.K."/>
            <person name="Langford C."/>
            <person name="Lawlor S."/>
            <person name="Leversha M."/>
            <person name="Lewis L."/>
            <person name="Liu W."/>
            <person name="Lloyd C."/>
            <person name="Lloyd D.M."/>
            <person name="Loulseged H."/>
            <person name="Loveland J.E."/>
            <person name="Lovell J.D."/>
            <person name="Lozado R."/>
            <person name="Lu J."/>
            <person name="Lyne R."/>
            <person name="Ma J."/>
            <person name="Maheshwari M."/>
            <person name="Matthews L.H."/>
            <person name="McDowall J."/>
            <person name="McLaren S."/>
            <person name="McMurray A."/>
            <person name="Meidl P."/>
            <person name="Meitinger T."/>
            <person name="Milne S."/>
            <person name="Miner G."/>
            <person name="Mistry S.L."/>
            <person name="Morgan M."/>
            <person name="Morris S."/>
            <person name="Mueller I."/>
            <person name="Mullikin J.C."/>
            <person name="Nguyen N."/>
            <person name="Nordsiek G."/>
            <person name="Nyakatura G."/>
            <person name="O'dell C.N."/>
            <person name="Okwuonu G."/>
            <person name="Palmer S."/>
            <person name="Pandian R."/>
            <person name="Parker D."/>
            <person name="Parrish J."/>
            <person name="Pasternak S."/>
            <person name="Patel D."/>
            <person name="Pearce A.V."/>
            <person name="Pearson D.M."/>
            <person name="Pelan S.E."/>
            <person name="Perez L."/>
            <person name="Porter K.M."/>
            <person name="Ramsey Y."/>
            <person name="Reichwald K."/>
            <person name="Rhodes S."/>
            <person name="Ridler K.A."/>
            <person name="Schlessinger D."/>
            <person name="Schueler M.G."/>
            <person name="Sehra H.K."/>
            <person name="Shaw-Smith C."/>
            <person name="Shen H."/>
            <person name="Sheridan E.M."/>
            <person name="Shownkeen R."/>
            <person name="Skuce C.D."/>
            <person name="Smith M.L."/>
            <person name="Sotheran E.C."/>
            <person name="Steingruber H.E."/>
            <person name="Steward C.A."/>
            <person name="Storey R."/>
            <person name="Swann R.M."/>
            <person name="Swarbreck D."/>
            <person name="Tabor P.E."/>
            <person name="Taudien S."/>
            <person name="Taylor T."/>
            <person name="Teague B."/>
            <person name="Thomas K."/>
            <person name="Thorpe A."/>
            <person name="Timms K."/>
            <person name="Tracey A."/>
            <person name="Trevanion S."/>
            <person name="Tromans A.C."/>
            <person name="d'Urso M."/>
            <person name="Verduzco D."/>
            <person name="Villasana D."/>
            <person name="Waldron L."/>
            <person name="Wall M."/>
            <person name="Wang Q."/>
            <person name="Warren J."/>
            <person name="Warry G.L."/>
            <person name="Wei X."/>
            <person name="West A."/>
            <person name="Whitehead S.L."/>
            <person name="Whiteley M.N."/>
            <person name="Wilkinson J.E."/>
            <person name="Willey D.L."/>
            <person name="Williams G."/>
            <person name="Williams L."/>
            <person name="Williamson A."/>
            <person name="Williamson H."/>
            <person name="Wilming L."/>
            <person name="Woodmansey R.L."/>
            <person name="Wray P.W."/>
            <person name="Yen J."/>
            <person name="Zhang J."/>
            <person name="Zhou J."/>
            <person name="Zoghbi H."/>
            <person name="Zorilla S."/>
            <person name="Buck D."/>
            <person name="Reinhardt R."/>
            <person name="Poustka A."/>
            <person name="Rosenthal A."/>
            <person name="Lehrach H."/>
            <person name="Meindl A."/>
            <person name="Minx P.J."/>
            <person name="Hillier L.W."/>
            <person name="Willard H.F."/>
            <person name="Wilson R.K."/>
            <person name="Waterston R.H."/>
            <person name="Rice C.M."/>
            <person name="Vaudin M."/>
            <person name="Coulson A."/>
            <person name="Nelson D.L."/>
            <person name="Weinstock G."/>
            <person name="Sulston J.E."/>
            <person name="Durbin R.M."/>
            <person name="Hubbard T."/>
            <person name="Gibbs R.A."/>
            <person name="Beck S."/>
            <person name="Rogers J."/>
            <person name="Bentley D.R."/>
        </authorList>
    </citation>
    <scope>NUCLEOTIDE SEQUENCE [LARGE SCALE GENOMIC DNA]</scope>
</reference>
<reference key="4">
    <citation type="journal article" date="2004" name="Genome Res.">
        <title>The status, quality, and expansion of the NIH full-length cDNA project: the Mammalian Gene Collection (MGC).</title>
        <authorList>
            <consortium name="The MGC Project Team"/>
        </authorList>
    </citation>
    <scope>NUCLEOTIDE SEQUENCE [LARGE SCALE MRNA] (ISOFORMS 1 AND 3)</scope>
    <source>
        <tissue>Brain</tissue>
        <tissue>Uterus</tissue>
    </source>
</reference>
<reference key="5">
    <citation type="journal article" date="1999" name="J. Biol. Chem.">
        <title>Identification and characterization of hPEM-2, a guanine nucleotide exchange factor specific for Cdc42.</title>
        <authorList>
            <person name="Reid T."/>
            <person name="Bathoorn A."/>
            <person name="Ahmadian M.R."/>
            <person name="Collard J.G."/>
        </authorList>
    </citation>
    <scope>FUNCTION</scope>
    <scope>SUBCELLULAR LOCATION</scope>
    <scope>TISSUE SPECIFICITY</scope>
</reference>
<reference key="6">
    <citation type="submission" date="2009-02" db="PDB data bank">
        <title>Solution structure of the SH3 domain from Rho guanine nucleotide exchange factor 9.</title>
        <authorList>
            <consortium name="RIKEN structural genomics initiative (RSGI)"/>
        </authorList>
    </citation>
    <scope>STRUCTURE BY NMR OF 7-75</scope>
</reference>
<reference key="7">
    <citation type="journal article" date="2004" name="J. Neurosci.">
        <title>The GDP-GTP exchange factor collybistin: an essential determinant of neuronal gephyrin clustering.</title>
        <authorList>
            <person name="Harvey K."/>
            <person name="Duguid I.C."/>
            <person name="Alldred M.J."/>
            <person name="Beatty S.E."/>
            <person name="Ward H."/>
            <person name="Keep N.H."/>
            <person name="Lingenfelter S.E."/>
            <person name="Pearce B.R."/>
            <person name="Lundgren J."/>
            <person name="Owen M.J."/>
            <person name="Smart T.G."/>
            <person name="Luescher B."/>
            <person name="Rees M.I."/>
            <person name="Harvey R.J."/>
        </authorList>
    </citation>
    <scope>VARIANT DEE8 ALA-55</scope>
    <scope>CHARACTERIZATION OF VARIANT DEE8 ALA-55</scope>
    <scope>ALTERNATIVE SPLICING</scope>
</reference>
<reference key="8">
    <citation type="journal article" date="2012" name="Epilepsia">
        <title>Targeted next generation sequencing as a diagnostic tool in epileptic disorders.</title>
        <authorList>
            <person name="Lemke J.R."/>
            <person name="Riesch E."/>
            <person name="Scheurenbrand T."/>
            <person name="Schubach M."/>
            <person name="Wilhelm C."/>
            <person name="Steiner I."/>
            <person name="Hansen J."/>
            <person name="Courage C."/>
            <person name="Gallati S."/>
            <person name="Buerki S."/>
            <person name="Strozzi S."/>
            <person name="Simonetti B.G."/>
            <person name="Grunt S."/>
            <person name="Steinlin M."/>
            <person name="Alber M."/>
            <person name="Wolff M."/>
            <person name="Klopstock T."/>
            <person name="Prott E.C."/>
            <person name="Lorenz R."/>
            <person name="Spaich C."/>
            <person name="Rona S."/>
            <person name="Lakshminarasimhan M."/>
            <person name="Kroell J."/>
            <person name="Dorn T."/>
            <person name="Kraemer G."/>
            <person name="Synofzik M."/>
            <person name="Becker F."/>
            <person name="Weber Y.G."/>
            <person name="Lerche H."/>
            <person name="Boehm D."/>
            <person name="Biskup S."/>
        </authorList>
    </citation>
    <scope>VARIANT DEE8 HIS-290</scope>
</reference>
<reference key="9">
    <citation type="journal article" date="2012" name="N. Engl. J. Med.">
        <title>Diagnostic exome sequencing in persons with severe intellectual disability.</title>
        <authorList>
            <person name="de Ligt J."/>
            <person name="Willemsen M.H."/>
            <person name="van Bon B.W."/>
            <person name="Kleefstra T."/>
            <person name="Yntema H.G."/>
            <person name="Kroes T."/>
            <person name="Vulto-van Silfhout A.T."/>
            <person name="Koolen D.A."/>
            <person name="de Vries P."/>
            <person name="Gilissen C."/>
            <person name="del Rosario M."/>
            <person name="Hoischen A."/>
            <person name="Scheffer H."/>
            <person name="de Vries B.B."/>
            <person name="Brunner H.G."/>
            <person name="Veltman J.A."/>
            <person name="Vissers L.E."/>
        </authorList>
    </citation>
    <scope>VARIANT LYS-401</scope>
</reference>
<reference key="10">
    <citation type="journal article" date="2015" name="J. Biol. Chem.">
        <title>Lipid binding defects and perturbed synaptogenic activity of a collybistinR290H mutant that causes epilepsy and intellectual disability.</title>
        <authorList>
            <person name="Papadopoulos T."/>
            <person name="Schemm R."/>
            <person name="Grubmueller H."/>
            <person name="Brose N."/>
        </authorList>
    </citation>
    <scope>VARIANT DEE8 HIS-290</scope>
</reference>
<organism>
    <name type="scientific">Homo sapiens</name>
    <name type="common">Human</name>
    <dbReference type="NCBI Taxonomy" id="9606"/>
    <lineage>
        <taxon>Eukaryota</taxon>
        <taxon>Metazoa</taxon>
        <taxon>Chordata</taxon>
        <taxon>Craniata</taxon>
        <taxon>Vertebrata</taxon>
        <taxon>Euteleostomi</taxon>
        <taxon>Mammalia</taxon>
        <taxon>Eutheria</taxon>
        <taxon>Euarchontoglires</taxon>
        <taxon>Primates</taxon>
        <taxon>Haplorrhini</taxon>
        <taxon>Catarrhini</taxon>
        <taxon>Hominidae</taxon>
        <taxon>Homo</taxon>
    </lineage>
</organism>
<proteinExistence type="evidence at protein level"/>